<accession>O97508</accession>
<protein>
    <recommendedName>
        <fullName>Thioredoxin</fullName>
        <shortName>Trx</shortName>
    </recommendedName>
</protein>
<keyword id="KW-0007">Acetylation</keyword>
<keyword id="KW-0010">Activator</keyword>
<keyword id="KW-0963">Cytoplasm</keyword>
<keyword id="KW-1015">Disulfide bond</keyword>
<keyword id="KW-0249">Electron transport</keyword>
<keyword id="KW-0539">Nucleus</keyword>
<keyword id="KW-0676">Redox-active center</keyword>
<keyword id="KW-1185">Reference proteome</keyword>
<keyword id="KW-0702">S-nitrosylation</keyword>
<keyword id="KW-0964">Secreted</keyword>
<keyword id="KW-0804">Transcription</keyword>
<keyword id="KW-0805">Transcription regulation</keyword>
<keyword id="KW-0813">Transport</keyword>
<dbReference type="EMBL" id="AB022431">
    <property type="protein sequence ID" value="BAA37154.1"/>
    <property type="molecule type" value="mRNA"/>
</dbReference>
<dbReference type="RefSeq" id="NP_001075282.1">
    <property type="nucleotide sequence ID" value="NM_001081813.1"/>
</dbReference>
<dbReference type="SMR" id="O97508"/>
<dbReference type="FunCoup" id="O97508">
    <property type="interactions" value="1636"/>
</dbReference>
<dbReference type="STRING" id="9796.ENSECAP00000011207"/>
<dbReference type="PaxDb" id="9796-ENSECAP00000011207"/>
<dbReference type="GeneID" id="100033827"/>
<dbReference type="KEGG" id="ecb:100033827"/>
<dbReference type="CTD" id="7295"/>
<dbReference type="HOGENOM" id="CLU_090389_14_6_1"/>
<dbReference type="InParanoid" id="O97508"/>
<dbReference type="OMA" id="DFHALWC"/>
<dbReference type="OrthoDB" id="2121326at2759"/>
<dbReference type="Proteomes" id="UP000002281">
    <property type="component" value="Chromosome 25"/>
</dbReference>
<dbReference type="Bgee" id="ENSECAG00000013324">
    <property type="expression patterns" value="Expressed in trophoblast and 23 other cell types or tissues"/>
</dbReference>
<dbReference type="ExpressionAtlas" id="O97508">
    <property type="expression patterns" value="baseline"/>
</dbReference>
<dbReference type="GO" id="GO:0005737">
    <property type="term" value="C:cytoplasm"/>
    <property type="evidence" value="ECO:0007669"/>
    <property type="project" value="UniProtKB-SubCell"/>
</dbReference>
<dbReference type="GO" id="GO:0005576">
    <property type="term" value="C:extracellular region"/>
    <property type="evidence" value="ECO:0007669"/>
    <property type="project" value="UniProtKB-SubCell"/>
</dbReference>
<dbReference type="GO" id="GO:0005634">
    <property type="term" value="C:nucleus"/>
    <property type="evidence" value="ECO:0007669"/>
    <property type="project" value="UniProtKB-SubCell"/>
</dbReference>
<dbReference type="GO" id="GO:0015035">
    <property type="term" value="F:protein-disulfide reductase activity"/>
    <property type="evidence" value="ECO:0007669"/>
    <property type="project" value="InterPro"/>
</dbReference>
<dbReference type="GO" id="GO:0043388">
    <property type="term" value="P:positive regulation of DNA binding"/>
    <property type="evidence" value="ECO:0000250"/>
    <property type="project" value="UniProtKB"/>
</dbReference>
<dbReference type="GO" id="GO:0009314">
    <property type="term" value="P:response to radiation"/>
    <property type="evidence" value="ECO:0000250"/>
    <property type="project" value="UniProtKB"/>
</dbReference>
<dbReference type="CDD" id="cd02947">
    <property type="entry name" value="TRX_family"/>
    <property type="match status" value="1"/>
</dbReference>
<dbReference type="FunFam" id="3.40.30.10:FF:000130">
    <property type="entry name" value="Thioredoxin"/>
    <property type="match status" value="1"/>
</dbReference>
<dbReference type="Gene3D" id="3.40.30.10">
    <property type="entry name" value="Glutaredoxin"/>
    <property type="match status" value="1"/>
</dbReference>
<dbReference type="InterPro" id="IPR005746">
    <property type="entry name" value="Thioredoxin"/>
</dbReference>
<dbReference type="InterPro" id="IPR036249">
    <property type="entry name" value="Thioredoxin-like_sf"/>
</dbReference>
<dbReference type="InterPro" id="IPR017937">
    <property type="entry name" value="Thioredoxin_CS"/>
</dbReference>
<dbReference type="InterPro" id="IPR013766">
    <property type="entry name" value="Thioredoxin_domain"/>
</dbReference>
<dbReference type="PANTHER" id="PTHR46115">
    <property type="entry name" value="THIOREDOXIN-LIKE PROTEIN 1"/>
    <property type="match status" value="1"/>
</dbReference>
<dbReference type="Pfam" id="PF00085">
    <property type="entry name" value="Thioredoxin"/>
    <property type="match status" value="1"/>
</dbReference>
<dbReference type="PIRSF" id="PIRSF000077">
    <property type="entry name" value="Thioredoxin"/>
    <property type="match status" value="1"/>
</dbReference>
<dbReference type="PRINTS" id="PR00421">
    <property type="entry name" value="THIOREDOXIN"/>
</dbReference>
<dbReference type="SUPFAM" id="SSF52833">
    <property type="entry name" value="Thioredoxin-like"/>
    <property type="match status" value="1"/>
</dbReference>
<dbReference type="PROSITE" id="PS00194">
    <property type="entry name" value="THIOREDOXIN_1"/>
    <property type="match status" value="1"/>
</dbReference>
<dbReference type="PROSITE" id="PS51352">
    <property type="entry name" value="THIOREDOXIN_2"/>
    <property type="match status" value="1"/>
</dbReference>
<evidence type="ECO:0000250" key="1"/>
<evidence type="ECO:0000250" key="2">
    <source>
        <dbReference type="UniProtKB" id="P10599"/>
    </source>
</evidence>
<evidence type="ECO:0000250" key="3">
    <source>
        <dbReference type="UniProtKB" id="P10639"/>
    </source>
</evidence>
<evidence type="ECO:0000255" key="4">
    <source>
        <dbReference type="PROSITE-ProRule" id="PRU00691"/>
    </source>
</evidence>
<evidence type="ECO:0000305" key="5"/>
<name>THIO_HORSE</name>
<reference key="1">
    <citation type="submission" date="1999-01" db="EMBL/GenBank/DDBJ databases">
        <title>Molecular cloning of equine thioredoxin.</title>
        <authorList>
            <person name="Tajima Y."/>
            <person name="Ishida N."/>
        </authorList>
    </citation>
    <scope>NUCLEOTIDE SEQUENCE [MRNA]</scope>
    <source>
        <strain>Thoroughbred</strain>
    </source>
</reference>
<comment type="function">
    <text evidence="1">Participates in various redox reactions through the reversible oxidation of its active center dithiol to a disulfide and catalyzes dithiol-disulfide exchange reactions (By similarity). Plays a role in the reversible S-nitrosylation of cysteine residues in target proteins, and thereby contributes to the response to intracellular nitric oxide. Nitrosylates the active site Cys of CASP3 in response to nitric oxide (NO), and thereby inhibits caspase-3 activity. Induces the FOS/JUN AP-1 DNA binding activity in ionizing radiation (IR) cells through its oxidation/reduction status and stimulates AP-1 transcriptional activity (By similarity).</text>
</comment>
<comment type="subunit">
    <text evidence="1">Homodimer; disulfide-linked. Interacts with TXNIP through the redox-active site. Interacts with MAP3K5 and CASP3. Interacts with APEX1; the interaction stimulates the FOS/JUN AP-1 DNA-binding activity in a redox-dependent manner (By similarity).</text>
</comment>
<comment type="subcellular location">
    <subcellularLocation>
        <location evidence="2">Nucleus</location>
    </subcellularLocation>
    <subcellularLocation>
        <location evidence="2">Cytoplasm</location>
    </subcellularLocation>
    <subcellularLocation>
        <location evidence="2">Secreted</location>
    </subcellularLocation>
    <text evidence="2">Translocates from the cytoplasm into the nucleus after phorbol 12-myristate 13-acetate induction (PMA). Predominantly in the cytoplasm in non irradiated cells. Radiation induces translocation of TRX from the cytoplasm to the nucleus. Secreted by a leaderless secretory pathway.</text>
</comment>
<comment type="PTM">
    <text evidence="1">In the fully reduced protein, both Cys-69 and Cys-73 are nitrosylated in response to nitric oxide (NO). When two disulfide bonds are present in the protein, only Cys-73 is nitrosylated. Cys-73 can serve as donor for nitrosylation of target proteins (By similarity).</text>
</comment>
<comment type="similarity">
    <text evidence="5">Belongs to the thioredoxin family.</text>
</comment>
<feature type="chain" id="PRO_0000120004" description="Thioredoxin">
    <location>
        <begin position="1"/>
        <end position="105"/>
    </location>
</feature>
<feature type="domain" description="Thioredoxin" evidence="4">
    <location>
        <begin position="2"/>
        <end position="103"/>
    </location>
</feature>
<feature type="active site" description="Nucleophile" evidence="1">
    <location>
        <position position="32"/>
    </location>
</feature>
<feature type="active site" description="Nucleophile" evidence="1">
    <location>
        <position position="35"/>
    </location>
</feature>
<feature type="site" description="Deprotonates C-terminal active site Cys" evidence="1">
    <location>
        <position position="26"/>
    </location>
</feature>
<feature type="site" description="Contributes to redox potential value" evidence="1">
    <location>
        <position position="33"/>
    </location>
</feature>
<feature type="site" description="Contributes to redox potential value" evidence="1">
    <location>
        <position position="34"/>
    </location>
</feature>
<feature type="modified residue" description="N6-acetyllysine" evidence="2">
    <location>
        <position position="3"/>
    </location>
</feature>
<feature type="modified residue" description="N6-succinyllysine" evidence="3">
    <location>
        <position position="8"/>
    </location>
</feature>
<feature type="modified residue" description="N6-acetyllysine" evidence="2">
    <location>
        <position position="39"/>
    </location>
</feature>
<feature type="modified residue" description="S-nitrosocysteine" evidence="2">
    <location>
        <position position="62"/>
    </location>
</feature>
<feature type="modified residue" description="S-nitrosocysteine" evidence="2">
    <location>
        <position position="69"/>
    </location>
</feature>
<feature type="modified residue" description="S-nitrosocysteine; alternate" evidence="2">
    <location>
        <position position="73"/>
    </location>
</feature>
<feature type="modified residue" description="N6-acetyllysine; alternate" evidence="3">
    <location>
        <position position="94"/>
    </location>
</feature>
<feature type="modified residue" description="N6-succinyllysine; alternate" evidence="3">
    <location>
        <position position="94"/>
    </location>
</feature>
<feature type="disulfide bond" description="Redox-active" evidence="4">
    <location>
        <begin position="32"/>
        <end position="35"/>
    </location>
</feature>
<feature type="disulfide bond" description="Interchain; alternate" evidence="1">
    <location>
        <position position="73"/>
    </location>
</feature>
<sequence>MVKQIESKSAFQEALNSAGEKLVVVDFSATWCGPCKMIKPFFHSLSEKYSNVVFLEVDVDDCQDVAAECEVKCMPTFQFFKKGQKVDEFSGANKEKLEATIKGLI</sequence>
<gene>
    <name type="primary">TXN</name>
</gene>
<organism>
    <name type="scientific">Equus caballus</name>
    <name type="common">Horse</name>
    <dbReference type="NCBI Taxonomy" id="9796"/>
    <lineage>
        <taxon>Eukaryota</taxon>
        <taxon>Metazoa</taxon>
        <taxon>Chordata</taxon>
        <taxon>Craniata</taxon>
        <taxon>Vertebrata</taxon>
        <taxon>Euteleostomi</taxon>
        <taxon>Mammalia</taxon>
        <taxon>Eutheria</taxon>
        <taxon>Laurasiatheria</taxon>
        <taxon>Perissodactyla</taxon>
        <taxon>Equidae</taxon>
        <taxon>Equus</taxon>
    </lineage>
</organism>
<proteinExistence type="inferred from homology"/>